<gene>
    <name evidence="1" type="primary">ecfA2</name>
    <name type="synonym">cbiO2</name>
    <name type="ordered locus">MGAS2096_Spy1876</name>
</gene>
<name>ECFA2_STRPB</name>
<protein>
    <recommendedName>
        <fullName evidence="1">Energy-coupling factor transporter ATP-binding protein EcfA2</fullName>
        <shortName evidence="1">ECF transporter A component EcfA2</shortName>
        <ecNumber evidence="1">7.-.-.-</ecNumber>
    </recommendedName>
</protein>
<feature type="chain" id="PRO_0000287996" description="Energy-coupling factor transporter ATP-binding protein EcfA2">
    <location>
        <begin position="1"/>
        <end position="280"/>
    </location>
</feature>
<feature type="domain" description="ABC transporter" evidence="1">
    <location>
        <begin position="3"/>
        <end position="245"/>
    </location>
</feature>
<feature type="binding site" evidence="1">
    <location>
        <begin position="40"/>
        <end position="47"/>
    </location>
    <ligand>
        <name>ATP</name>
        <dbReference type="ChEBI" id="CHEBI:30616"/>
    </ligand>
</feature>
<comment type="function">
    <text evidence="1">ATP-binding (A) component of a common energy-coupling factor (ECF) ABC-transporter complex. Unlike classic ABC transporters this ECF transporter provides the energy necessary to transport a number of different substrates.</text>
</comment>
<comment type="subunit">
    <text evidence="1">Forms a stable energy-coupling factor (ECF) transporter complex composed of 2 membrane-embedded substrate-binding proteins (S component), 2 ATP-binding proteins (A component) and 2 transmembrane proteins (T component).</text>
</comment>
<comment type="subcellular location">
    <subcellularLocation>
        <location evidence="1">Cell membrane</location>
        <topology evidence="1">Peripheral membrane protein</topology>
    </subcellularLocation>
</comment>
<comment type="similarity">
    <text evidence="1">Belongs to the ABC transporter superfamily. Energy-coupling factor EcfA family.</text>
</comment>
<reference key="1">
    <citation type="journal article" date="2006" name="Proc. Natl. Acad. Sci. U.S.A.">
        <title>Molecular genetic anatomy of inter- and intraserotype variation in the human bacterial pathogen group A Streptococcus.</title>
        <authorList>
            <person name="Beres S.B."/>
            <person name="Richter E.W."/>
            <person name="Nagiec M.J."/>
            <person name="Sumby P."/>
            <person name="Porcella S.F."/>
            <person name="DeLeo F.R."/>
            <person name="Musser J.M."/>
        </authorList>
    </citation>
    <scope>NUCLEOTIDE SEQUENCE [LARGE SCALE GENOMIC DNA]</scope>
    <source>
        <strain>MGAS2096</strain>
    </source>
</reference>
<sequence length="280" mass="30863">MSINLQNVSYTYQAGTPFEGRALFNINLDILDGSYTAFIGHTGSGKSTIMQLLNGLHVPTTGIVSVDKQDITNHSKNKEIKSIRKHVGLVFQFPESQLFEETVLKDVAFGPQNFGVSPEEAEALAREKLALVGISENLFEKNPFELSGGQMRRVAIAGILAMQPKVLVLDEPTAGLDPKGRKELMTIFKKLHQSGMTIVLVTHLMDDVANYADFVYVLDKGKIILSGKPKTIFQQVSLLEKKQLGVPKVTKLAQRLVDRGIPISSLPITLEELREVLKHG</sequence>
<evidence type="ECO:0000255" key="1">
    <source>
        <dbReference type="HAMAP-Rule" id="MF_01710"/>
    </source>
</evidence>
<accession>Q1J983</accession>
<dbReference type="EC" id="7.-.-.-" evidence="1"/>
<dbReference type="EMBL" id="CP000261">
    <property type="protein sequence ID" value="ABF36928.1"/>
    <property type="molecule type" value="Genomic_DNA"/>
</dbReference>
<dbReference type="SMR" id="Q1J983"/>
<dbReference type="KEGG" id="spj:MGAS2096_Spy1876"/>
<dbReference type="HOGENOM" id="CLU_000604_1_22_9"/>
<dbReference type="GO" id="GO:0043190">
    <property type="term" value="C:ATP-binding cassette (ABC) transporter complex"/>
    <property type="evidence" value="ECO:0007669"/>
    <property type="project" value="TreeGrafter"/>
</dbReference>
<dbReference type="GO" id="GO:0005524">
    <property type="term" value="F:ATP binding"/>
    <property type="evidence" value="ECO:0007669"/>
    <property type="project" value="UniProtKB-KW"/>
</dbReference>
<dbReference type="GO" id="GO:0016887">
    <property type="term" value="F:ATP hydrolysis activity"/>
    <property type="evidence" value="ECO:0007669"/>
    <property type="project" value="InterPro"/>
</dbReference>
<dbReference type="GO" id="GO:0042626">
    <property type="term" value="F:ATPase-coupled transmembrane transporter activity"/>
    <property type="evidence" value="ECO:0007669"/>
    <property type="project" value="TreeGrafter"/>
</dbReference>
<dbReference type="CDD" id="cd03225">
    <property type="entry name" value="ABC_cobalt_CbiO_domain1"/>
    <property type="match status" value="1"/>
</dbReference>
<dbReference type="FunFam" id="3.40.50.300:FF:000224">
    <property type="entry name" value="Energy-coupling factor transporter ATP-binding protein EcfA"/>
    <property type="match status" value="1"/>
</dbReference>
<dbReference type="Gene3D" id="3.40.50.300">
    <property type="entry name" value="P-loop containing nucleotide triphosphate hydrolases"/>
    <property type="match status" value="1"/>
</dbReference>
<dbReference type="InterPro" id="IPR003593">
    <property type="entry name" value="AAA+_ATPase"/>
</dbReference>
<dbReference type="InterPro" id="IPR003439">
    <property type="entry name" value="ABC_transporter-like_ATP-bd"/>
</dbReference>
<dbReference type="InterPro" id="IPR017871">
    <property type="entry name" value="ABC_transporter-like_CS"/>
</dbReference>
<dbReference type="InterPro" id="IPR015856">
    <property type="entry name" value="ABC_transpr_CbiO/EcfA_su"/>
</dbReference>
<dbReference type="InterPro" id="IPR050095">
    <property type="entry name" value="ECF_ABC_transporter_ATP-bd"/>
</dbReference>
<dbReference type="InterPro" id="IPR030946">
    <property type="entry name" value="EcfA2"/>
</dbReference>
<dbReference type="InterPro" id="IPR027417">
    <property type="entry name" value="P-loop_NTPase"/>
</dbReference>
<dbReference type="NCBIfam" id="TIGR04521">
    <property type="entry name" value="ECF_ATPase_2"/>
    <property type="match status" value="1"/>
</dbReference>
<dbReference type="PANTHER" id="PTHR43553:SF27">
    <property type="entry name" value="ENERGY-COUPLING FACTOR TRANSPORTER ATP-BINDING PROTEIN ECFA2"/>
    <property type="match status" value="1"/>
</dbReference>
<dbReference type="PANTHER" id="PTHR43553">
    <property type="entry name" value="HEAVY METAL TRANSPORTER"/>
    <property type="match status" value="1"/>
</dbReference>
<dbReference type="Pfam" id="PF00005">
    <property type="entry name" value="ABC_tran"/>
    <property type="match status" value="1"/>
</dbReference>
<dbReference type="SMART" id="SM00382">
    <property type="entry name" value="AAA"/>
    <property type="match status" value="1"/>
</dbReference>
<dbReference type="SUPFAM" id="SSF52540">
    <property type="entry name" value="P-loop containing nucleoside triphosphate hydrolases"/>
    <property type="match status" value="1"/>
</dbReference>
<dbReference type="PROSITE" id="PS00211">
    <property type="entry name" value="ABC_TRANSPORTER_1"/>
    <property type="match status" value="1"/>
</dbReference>
<dbReference type="PROSITE" id="PS50893">
    <property type="entry name" value="ABC_TRANSPORTER_2"/>
    <property type="match status" value="1"/>
</dbReference>
<dbReference type="PROSITE" id="PS51246">
    <property type="entry name" value="CBIO"/>
    <property type="match status" value="1"/>
</dbReference>
<proteinExistence type="inferred from homology"/>
<organism>
    <name type="scientific">Streptococcus pyogenes serotype M12 (strain MGAS2096)</name>
    <dbReference type="NCBI Taxonomy" id="370553"/>
    <lineage>
        <taxon>Bacteria</taxon>
        <taxon>Bacillati</taxon>
        <taxon>Bacillota</taxon>
        <taxon>Bacilli</taxon>
        <taxon>Lactobacillales</taxon>
        <taxon>Streptococcaceae</taxon>
        <taxon>Streptococcus</taxon>
    </lineage>
</organism>
<keyword id="KW-0067">ATP-binding</keyword>
<keyword id="KW-1003">Cell membrane</keyword>
<keyword id="KW-0472">Membrane</keyword>
<keyword id="KW-0547">Nucleotide-binding</keyword>
<keyword id="KW-1278">Translocase</keyword>
<keyword id="KW-0813">Transport</keyword>